<comment type="function">
    <text evidence="1">This protein is located at the 30S-50S ribosomal subunit interface and may play a role in the structure and function of the aminoacyl-tRNA binding site.</text>
</comment>
<comment type="similarity">
    <text evidence="1">Belongs to the bacterial ribosomal protein bL19 family.</text>
</comment>
<proteinExistence type="inferred from homology"/>
<accession>Q1MRU9</accession>
<evidence type="ECO:0000255" key="1">
    <source>
        <dbReference type="HAMAP-Rule" id="MF_00402"/>
    </source>
</evidence>
<evidence type="ECO:0000305" key="2"/>
<gene>
    <name evidence="1" type="primary">rplS</name>
    <name type="ordered locus">LI0221</name>
</gene>
<dbReference type="EMBL" id="AM180252">
    <property type="protein sequence ID" value="CAJ54277.1"/>
    <property type="molecule type" value="Genomic_DNA"/>
</dbReference>
<dbReference type="RefSeq" id="WP_011526303.1">
    <property type="nucleotide sequence ID" value="NC_008011.1"/>
</dbReference>
<dbReference type="SMR" id="Q1MRU9"/>
<dbReference type="STRING" id="363253.LI0221"/>
<dbReference type="KEGG" id="lip:LI0221"/>
<dbReference type="eggNOG" id="COG0335">
    <property type="taxonomic scope" value="Bacteria"/>
</dbReference>
<dbReference type="HOGENOM" id="CLU_103507_2_1_7"/>
<dbReference type="OrthoDB" id="9803541at2"/>
<dbReference type="Proteomes" id="UP000002430">
    <property type="component" value="Chromosome"/>
</dbReference>
<dbReference type="GO" id="GO:0022625">
    <property type="term" value="C:cytosolic large ribosomal subunit"/>
    <property type="evidence" value="ECO:0007669"/>
    <property type="project" value="TreeGrafter"/>
</dbReference>
<dbReference type="GO" id="GO:0003735">
    <property type="term" value="F:structural constituent of ribosome"/>
    <property type="evidence" value="ECO:0007669"/>
    <property type="project" value="InterPro"/>
</dbReference>
<dbReference type="GO" id="GO:0006412">
    <property type="term" value="P:translation"/>
    <property type="evidence" value="ECO:0007669"/>
    <property type="project" value="UniProtKB-UniRule"/>
</dbReference>
<dbReference type="Gene3D" id="2.30.30.790">
    <property type="match status" value="1"/>
</dbReference>
<dbReference type="HAMAP" id="MF_00402">
    <property type="entry name" value="Ribosomal_bL19"/>
    <property type="match status" value="1"/>
</dbReference>
<dbReference type="InterPro" id="IPR001857">
    <property type="entry name" value="Ribosomal_bL19"/>
</dbReference>
<dbReference type="InterPro" id="IPR018257">
    <property type="entry name" value="Ribosomal_bL19_CS"/>
</dbReference>
<dbReference type="InterPro" id="IPR038657">
    <property type="entry name" value="Ribosomal_bL19_sf"/>
</dbReference>
<dbReference type="InterPro" id="IPR008991">
    <property type="entry name" value="Translation_prot_SH3-like_sf"/>
</dbReference>
<dbReference type="NCBIfam" id="TIGR01024">
    <property type="entry name" value="rplS_bact"/>
    <property type="match status" value="1"/>
</dbReference>
<dbReference type="PANTHER" id="PTHR15680:SF9">
    <property type="entry name" value="LARGE RIBOSOMAL SUBUNIT PROTEIN BL19M"/>
    <property type="match status" value="1"/>
</dbReference>
<dbReference type="PANTHER" id="PTHR15680">
    <property type="entry name" value="RIBOSOMAL PROTEIN L19"/>
    <property type="match status" value="1"/>
</dbReference>
<dbReference type="Pfam" id="PF01245">
    <property type="entry name" value="Ribosomal_L19"/>
    <property type="match status" value="1"/>
</dbReference>
<dbReference type="PIRSF" id="PIRSF002191">
    <property type="entry name" value="Ribosomal_L19"/>
    <property type="match status" value="1"/>
</dbReference>
<dbReference type="PRINTS" id="PR00061">
    <property type="entry name" value="RIBOSOMALL19"/>
</dbReference>
<dbReference type="SUPFAM" id="SSF50104">
    <property type="entry name" value="Translation proteins SH3-like domain"/>
    <property type="match status" value="1"/>
</dbReference>
<dbReference type="PROSITE" id="PS01015">
    <property type="entry name" value="RIBOSOMAL_L19"/>
    <property type="match status" value="1"/>
</dbReference>
<feature type="chain" id="PRO_0000252516" description="Large ribosomal subunit protein bL19">
    <location>
        <begin position="1"/>
        <end position="115"/>
    </location>
</feature>
<name>RL19_LAWIP</name>
<reference key="1">
    <citation type="submission" date="2005-11" db="EMBL/GenBank/DDBJ databases">
        <title>The complete genome sequence of Lawsonia intracellularis: the causative agent of proliferative enteropathy.</title>
        <authorList>
            <person name="Kaur K."/>
            <person name="Zhang Q."/>
            <person name="Beckler D."/>
            <person name="Munir S."/>
            <person name="Li L."/>
            <person name="Kinsley K."/>
            <person name="Herron L."/>
            <person name="Peterson A."/>
            <person name="May B."/>
            <person name="Singh S."/>
            <person name="Gebhart C."/>
            <person name="Kapur V."/>
        </authorList>
    </citation>
    <scope>NUCLEOTIDE SEQUENCE [LARGE SCALE GENOMIC DNA]</scope>
    <source>
        <strain>PHE/MN1-00</strain>
    </source>
</reference>
<protein>
    <recommendedName>
        <fullName evidence="1">Large ribosomal subunit protein bL19</fullName>
    </recommendedName>
    <alternativeName>
        <fullName evidence="2">50S ribosomal protein L19</fullName>
    </alternativeName>
</protein>
<organism>
    <name type="scientific">Lawsonia intracellularis (strain PHE/MN1-00)</name>
    <dbReference type="NCBI Taxonomy" id="363253"/>
    <lineage>
        <taxon>Bacteria</taxon>
        <taxon>Pseudomonadati</taxon>
        <taxon>Thermodesulfobacteriota</taxon>
        <taxon>Desulfovibrionia</taxon>
        <taxon>Desulfovibrionales</taxon>
        <taxon>Desulfovibrionaceae</taxon>
        <taxon>Lawsonia</taxon>
    </lineage>
</organism>
<keyword id="KW-1185">Reference proteome</keyword>
<keyword id="KW-0687">Ribonucleoprotein</keyword>
<keyword id="KW-0689">Ribosomal protein</keyword>
<sequence length="115" mass="13418">MDIFKKIEREQMRLDIPSFKSGDTIKVYFRIVEGEKERIQVFQGNVIRIHRGTTNATITVRKISDGVGVERIVPLHSPLVDHIEVVSEGRVRRSRLYYLRNLRGNAARIKPKKIY</sequence>